<dbReference type="EC" id="5.2.1.8" evidence="1"/>
<dbReference type="EMBL" id="CP000943">
    <property type="protein sequence ID" value="ACA20838.1"/>
    <property type="molecule type" value="Genomic_DNA"/>
</dbReference>
<dbReference type="RefSeq" id="WP_012336214.1">
    <property type="nucleotide sequence ID" value="NC_010511.1"/>
</dbReference>
<dbReference type="SMR" id="B0UD17"/>
<dbReference type="STRING" id="426117.M446_6582"/>
<dbReference type="KEGG" id="met:M446_6582"/>
<dbReference type="eggNOG" id="COG0544">
    <property type="taxonomic scope" value="Bacteria"/>
</dbReference>
<dbReference type="HOGENOM" id="CLU_033058_2_2_5"/>
<dbReference type="GO" id="GO:0005737">
    <property type="term" value="C:cytoplasm"/>
    <property type="evidence" value="ECO:0007669"/>
    <property type="project" value="UniProtKB-SubCell"/>
</dbReference>
<dbReference type="GO" id="GO:0003755">
    <property type="term" value="F:peptidyl-prolyl cis-trans isomerase activity"/>
    <property type="evidence" value="ECO:0007669"/>
    <property type="project" value="UniProtKB-UniRule"/>
</dbReference>
<dbReference type="GO" id="GO:0044183">
    <property type="term" value="F:protein folding chaperone"/>
    <property type="evidence" value="ECO:0007669"/>
    <property type="project" value="TreeGrafter"/>
</dbReference>
<dbReference type="GO" id="GO:0043022">
    <property type="term" value="F:ribosome binding"/>
    <property type="evidence" value="ECO:0007669"/>
    <property type="project" value="TreeGrafter"/>
</dbReference>
<dbReference type="GO" id="GO:0051083">
    <property type="term" value="P:'de novo' cotranslational protein folding"/>
    <property type="evidence" value="ECO:0007669"/>
    <property type="project" value="TreeGrafter"/>
</dbReference>
<dbReference type="GO" id="GO:0051301">
    <property type="term" value="P:cell division"/>
    <property type="evidence" value="ECO:0007669"/>
    <property type="project" value="UniProtKB-KW"/>
</dbReference>
<dbReference type="GO" id="GO:0061077">
    <property type="term" value="P:chaperone-mediated protein folding"/>
    <property type="evidence" value="ECO:0007669"/>
    <property type="project" value="TreeGrafter"/>
</dbReference>
<dbReference type="GO" id="GO:0015031">
    <property type="term" value="P:protein transport"/>
    <property type="evidence" value="ECO:0007669"/>
    <property type="project" value="UniProtKB-UniRule"/>
</dbReference>
<dbReference type="GO" id="GO:0043335">
    <property type="term" value="P:protein unfolding"/>
    <property type="evidence" value="ECO:0007669"/>
    <property type="project" value="TreeGrafter"/>
</dbReference>
<dbReference type="FunFam" id="3.10.50.40:FF:000001">
    <property type="entry name" value="Trigger factor"/>
    <property type="match status" value="1"/>
</dbReference>
<dbReference type="Gene3D" id="3.10.50.40">
    <property type="match status" value="1"/>
</dbReference>
<dbReference type="Gene3D" id="3.30.70.1050">
    <property type="entry name" value="Trigger factor ribosome-binding domain"/>
    <property type="match status" value="1"/>
</dbReference>
<dbReference type="Gene3D" id="1.10.3120.10">
    <property type="entry name" value="Trigger factor, C-terminal domain"/>
    <property type="match status" value="1"/>
</dbReference>
<dbReference type="HAMAP" id="MF_00303">
    <property type="entry name" value="Trigger_factor_Tig"/>
    <property type="match status" value="1"/>
</dbReference>
<dbReference type="InterPro" id="IPR046357">
    <property type="entry name" value="PPIase_dom_sf"/>
</dbReference>
<dbReference type="InterPro" id="IPR001179">
    <property type="entry name" value="PPIase_FKBP_dom"/>
</dbReference>
<dbReference type="InterPro" id="IPR005215">
    <property type="entry name" value="Trig_fac"/>
</dbReference>
<dbReference type="InterPro" id="IPR008880">
    <property type="entry name" value="Trigger_fac_C"/>
</dbReference>
<dbReference type="InterPro" id="IPR037041">
    <property type="entry name" value="Trigger_fac_C_sf"/>
</dbReference>
<dbReference type="InterPro" id="IPR008881">
    <property type="entry name" value="Trigger_fac_ribosome-bd_bac"/>
</dbReference>
<dbReference type="InterPro" id="IPR036611">
    <property type="entry name" value="Trigger_fac_ribosome-bd_sf"/>
</dbReference>
<dbReference type="InterPro" id="IPR027304">
    <property type="entry name" value="Trigger_fact/SurA_dom_sf"/>
</dbReference>
<dbReference type="NCBIfam" id="TIGR00115">
    <property type="entry name" value="tig"/>
    <property type="match status" value="1"/>
</dbReference>
<dbReference type="PANTHER" id="PTHR30560">
    <property type="entry name" value="TRIGGER FACTOR CHAPERONE AND PEPTIDYL-PROLYL CIS/TRANS ISOMERASE"/>
    <property type="match status" value="1"/>
</dbReference>
<dbReference type="PANTHER" id="PTHR30560:SF3">
    <property type="entry name" value="TRIGGER FACTOR-LIKE PROTEIN TIG, CHLOROPLASTIC"/>
    <property type="match status" value="1"/>
</dbReference>
<dbReference type="Pfam" id="PF00254">
    <property type="entry name" value="FKBP_C"/>
    <property type="match status" value="1"/>
</dbReference>
<dbReference type="Pfam" id="PF05698">
    <property type="entry name" value="Trigger_C"/>
    <property type="match status" value="1"/>
</dbReference>
<dbReference type="Pfam" id="PF05697">
    <property type="entry name" value="Trigger_N"/>
    <property type="match status" value="1"/>
</dbReference>
<dbReference type="PIRSF" id="PIRSF003095">
    <property type="entry name" value="Trigger_factor"/>
    <property type="match status" value="1"/>
</dbReference>
<dbReference type="SUPFAM" id="SSF54534">
    <property type="entry name" value="FKBP-like"/>
    <property type="match status" value="1"/>
</dbReference>
<dbReference type="SUPFAM" id="SSF109998">
    <property type="entry name" value="Triger factor/SurA peptide-binding domain-like"/>
    <property type="match status" value="1"/>
</dbReference>
<dbReference type="SUPFAM" id="SSF102735">
    <property type="entry name" value="Trigger factor ribosome-binding domain"/>
    <property type="match status" value="1"/>
</dbReference>
<dbReference type="PROSITE" id="PS50059">
    <property type="entry name" value="FKBP_PPIASE"/>
    <property type="match status" value="1"/>
</dbReference>
<protein>
    <recommendedName>
        <fullName evidence="1">Trigger factor</fullName>
        <shortName evidence="1">TF</shortName>
        <ecNumber evidence="1">5.2.1.8</ecNumber>
    </recommendedName>
    <alternativeName>
        <fullName evidence="1">PPIase</fullName>
    </alternativeName>
</protein>
<reference key="1">
    <citation type="submission" date="2008-02" db="EMBL/GenBank/DDBJ databases">
        <title>Complete sequence of chromosome of Methylobacterium sp. 4-46.</title>
        <authorList>
            <consortium name="US DOE Joint Genome Institute"/>
            <person name="Copeland A."/>
            <person name="Lucas S."/>
            <person name="Lapidus A."/>
            <person name="Glavina del Rio T."/>
            <person name="Dalin E."/>
            <person name="Tice H."/>
            <person name="Bruce D."/>
            <person name="Goodwin L."/>
            <person name="Pitluck S."/>
            <person name="Chertkov O."/>
            <person name="Brettin T."/>
            <person name="Detter J.C."/>
            <person name="Han C."/>
            <person name="Kuske C.R."/>
            <person name="Schmutz J."/>
            <person name="Larimer F."/>
            <person name="Land M."/>
            <person name="Hauser L."/>
            <person name="Kyrpides N."/>
            <person name="Ivanova N."/>
            <person name="Marx C.J."/>
            <person name="Richardson P."/>
        </authorList>
    </citation>
    <scope>NUCLEOTIDE SEQUENCE [LARGE SCALE GENOMIC DNA]</scope>
    <source>
        <strain>4-46</strain>
    </source>
</reference>
<accession>B0UD17</accession>
<name>TIG_METS4</name>
<evidence type="ECO:0000255" key="1">
    <source>
        <dbReference type="HAMAP-Rule" id="MF_00303"/>
    </source>
</evidence>
<evidence type="ECO:0000256" key="2">
    <source>
        <dbReference type="SAM" id="MobiDB-lite"/>
    </source>
</evidence>
<sequence>MQVTETKSEGLKREFQVVLAAAELEDRLTTELAGMKDKVQLKGFRPGKVPVAHLRRVYGRSIMADVVQNAVNEANQKILEENKLKLALEPQIKMPEDKAEIEKALDAKADLAFQVALEVMPTFELQDHSDITVTKPVATVSDEEVETALKRMAEQSRSYADRPEGSAAETGDRVVIDFVGRIGGETFEGGSAEDADLDLGSNTFIPGFEDQLLGAKAGEARTVTVTFPEGYPAEHLAGKEAVFDVTVKAVKAPGEAQIDDELAKTFGLENLDALKDAVRKSLANELDAQSRRRVKKALLDALDARYAFDLPPTLVHQEFAAVWAQVEADLKSRGKTFEDEGTTEEKAQGEYRRIAERRVRLGLVLAQVGETADIKVPDEEVNQALIARLRQFPGQEREVYDFYRKNPQAMAELRAPLFEEKVVDHVLGQVKLVEEPVSKEALFADDEDEAAEAAAPASEAGASKGVISEGVISEGSAPSHETGAA</sequence>
<organism>
    <name type="scientific">Methylobacterium sp. (strain 4-46)</name>
    <dbReference type="NCBI Taxonomy" id="426117"/>
    <lineage>
        <taxon>Bacteria</taxon>
        <taxon>Pseudomonadati</taxon>
        <taxon>Pseudomonadota</taxon>
        <taxon>Alphaproteobacteria</taxon>
        <taxon>Hyphomicrobiales</taxon>
        <taxon>Methylobacteriaceae</taxon>
        <taxon>Methylobacterium</taxon>
    </lineage>
</organism>
<keyword id="KW-0131">Cell cycle</keyword>
<keyword id="KW-0132">Cell division</keyword>
<keyword id="KW-0143">Chaperone</keyword>
<keyword id="KW-0963">Cytoplasm</keyword>
<keyword id="KW-0413">Isomerase</keyword>
<keyword id="KW-0697">Rotamase</keyword>
<comment type="function">
    <text evidence="1">Involved in protein export. Acts as a chaperone by maintaining the newly synthesized protein in an open conformation. Functions as a peptidyl-prolyl cis-trans isomerase.</text>
</comment>
<comment type="catalytic activity">
    <reaction evidence="1">
        <text>[protein]-peptidylproline (omega=180) = [protein]-peptidylproline (omega=0)</text>
        <dbReference type="Rhea" id="RHEA:16237"/>
        <dbReference type="Rhea" id="RHEA-COMP:10747"/>
        <dbReference type="Rhea" id="RHEA-COMP:10748"/>
        <dbReference type="ChEBI" id="CHEBI:83833"/>
        <dbReference type="ChEBI" id="CHEBI:83834"/>
        <dbReference type="EC" id="5.2.1.8"/>
    </reaction>
</comment>
<comment type="subcellular location">
    <subcellularLocation>
        <location>Cytoplasm</location>
    </subcellularLocation>
    <text evidence="1">About half TF is bound to the ribosome near the polypeptide exit tunnel while the other half is free in the cytoplasm.</text>
</comment>
<comment type="domain">
    <text evidence="1">Consists of 3 domains; the N-terminus binds the ribosome, the middle domain has PPIase activity, while the C-terminus has intrinsic chaperone activity on its own.</text>
</comment>
<comment type="similarity">
    <text evidence="1">Belongs to the FKBP-type PPIase family. Tig subfamily.</text>
</comment>
<proteinExistence type="inferred from homology"/>
<feature type="chain" id="PRO_1000115555" description="Trigger factor">
    <location>
        <begin position="1"/>
        <end position="485"/>
    </location>
</feature>
<feature type="domain" description="PPIase FKBP-type" evidence="1">
    <location>
        <begin position="171"/>
        <end position="256"/>
    </location>
</feature>
<feature type="region of interest" description="Disordered" evidence="2">
    <location>
        <begin position="443"/>
        <end position="485"/>
    </location>
</feature>
<feature type="compositionally biased region" description="Low complexity" evidence="2">
    <location>
        <begin position="452"/>
        <end position="462"/>
    </location>
</feature>
<gene>
    <name evidence="1" type="primary">tig</name>
    <name type="ordered locus">M446_6582</name>
</gene>